<name>MTRH_METTH</name>
<protein>
    <recommendedName>
        <fullName evidence="1">Tetrahydromethanopterin S-methyltransferase subunit H</fullName>
        <ecNumber evidence="1">7.2.1.4</ecNumber>
    </recommendedName>
    <alternativeName>
        <fullName evidence="1">N5-methyltetrahydromethanopterin--coenzyme M methyltransferase subunit H</fullName>
    </alternativeName>
</protein>
<evidence type="ECO:0000255" key="1">
    <source>
        <dbReference type="HAMAP-Rule" id="MF_01501"/>
    </source>
</evidence>
<organism>
    <name type="scientific">Methanothermobacter thermautotrophicus (strain ATCC 29096 / DSM 1053 / JCM 10044 / NBRC 100330 / Delta H)</name>
    <name type="common">Methanobacterium thermoautotrophicum</name>
    <dbReference type="NCBI Taxonomy" id="187420"/>
    <lineage>
        <taxon>Archaea</taxon>
        <taxon>Methanobacteriati</taxon>
        <taxon>Methanobacteriota</taxon>
        <taxon>Methanomada group</taxon>
        <taxon>Methanobacteria</taxon>
        <taxon>Methanobacteriales</taxon>
        <taxon>Methanobacteriaceae</taxon>
        <taxon>Methanothermobacter</taxon>
    </lineage>
</organism>
<keyword id="KW-0484">Methanogenesis</keyword>
<keyword id="KW-0489">Methyltransferase</keyword>
<keyword id="KW-0554">One-carbon metabolism</keyword>
<keyword id="KW-1185">Reference proteome</keyword>
<keyword id="KW-0808">Transferase</keyword>
<keyword id="KW-1278">Translocase</keyword>
<sequence>MFRFDKEQIVLDIAGTKIGGQPGEYPTVLAGTIFYGGHSIIEDEKAGVFDKDKAEALIKTQEEMSDVTGNPHIVQTFGQTPEAIVKYLEFVGDVTDAPFFIDSTSGEARIAGANYASEVGLEDRAIYNSVNMAADEAELEALKETKLSASIVLGFNPMDPTVDGKIGIWEDGAGTIDKGLLEMAAECGIDKYLMDVAVTPLGQGAGVAVRTSFAVKSKWGYPVGSGIHNVPSAWDWLREYKKDHKEAWPVCDVGSNLIQQMAGGDFVLYGPIENAKMAFPACAMADIFISEAAKDIGTEPVEDHPFFKLL</sequence>
<feature type="chain" id="PRO_0000147567" description="Tetrahydromethanopterin S-methyltransferase subunit H">
    <location>
        <begin position="1"/>
        <end position="310"/>
    </location>
</feature>
<accession>O27224</accession>
<comment type="function">
    <text evidence="1">Part of a complex that catalyzes the formation of methyl-coenzyme M and tetrahydromethanopterin from coenzyme M and methyl-tetrahydromethanopterin. This is an energy-conserving, sodium-ion translocating step. MtrH catalyzes the transfer of the methyl group from methyl-tetrahydromethanopterin to the corrinoid prosthetic group of MtrA.</text>
</comment>
<comment type="catalytic activity">
    <reaction evidence="1">
        <text>5-methyl-5,6,7,8-tetrahydromethanopterin + coenzyme M + 2 Na(+)(in) = 5,6,7,8-tetrahydromethanopterin + methyl-coenzyme M + 2 Na(+)(out)</text>
        <dbReference type="Rhea" id="RHEA:53492"/>
        <dbReference type="ChEBI" id="CHEBI:29101"/>
        <dbReference type="ChEBI" id="CHEBI:58103"/>
        <dbReference type="ChEBI" id="CHEBI:58116"/>
        <dbReference type="ChEBI" id="CHEBI:58286"/>
        <dbReference type="ChEBI" id="CHEBI:58319"/>
        <dbReference type="EC" id="7.2.1.4"/>
    </reaction>
</comment>
<comment type="pathway">
    <text evidence="1">One-carbon metabolism; methanogenesis from CO(2); methyl-coenzyme M from 5,10-methylene-5,6,7,8-tetrahydromethanopterin: step 2/2.</text>
</comment>
<comment type="subunit">
    <text evidence="1">The complex is composed of 8 subunits; MtrA, MtrB, MtrC, MtrD, MtrE, MtrF, MtrG and MtrH.</text>
</comment>
<comment type="similarity">
    <text evidence="1">Belongs to the MtrH family.</text>
</comment>
<dbReference type="EC" id="7.2.1.4" evidence="1"/>
<dbReference type="EMBL" id="AE000666">
    <property type="protein sequence ID" value="AAB85645.1"/>
    <property type="molecule type" value="Genomic_DNA"/>
</dbReference>
<dbReference type="PIR" id="A69021">
    <property type="entry name" value="A69021"/>
</dbReference>
<dbReference type="RefSeq" id="WP_010876780.1">
    <property type="nucleotide sequence ID" value="NC_000916.1"/>
</dbReference>
<dbReference type="SMR" id="O27224"/>
<dbReference type="FunCoup" id="O27224">
    <property type="interactions" value="67"/>
</dbReference>
<dbReference type="IntAct" id="O27224">
    <property type="interactions" value="1"/>
</dbReference>
<dbReference type="STRING" id="187420.MTH_1156"/>
<dbReference type="PaxDb" id="187420-MTH_1156"/>
<dbReference type="EnsemblBacteria" id="AAB85645">
    <property type="protein sequence ID" value="AAB85645"/>
    <property type="gene ID" value="MTH_1156"/>
</dbReference>
<dbReference type="GeneID" id="82297597"/>
<dbReference type="KEGG" id="mth:MTH_1156"/>
<dbReference type="PATRIC" id="fig|187420.15.peg.1133"/>
<dbReference type="HOGENOM" id="CLU_048697_0_0_2"/>
<dbReference type="InParanoid" id="O27224"/>
<dbReference type="UniPathway" id="UPA00640">
    <property type="reaction ID" value="UER00698"/>
</dbReference>
<dbReference type="Proteomes" id="UP000005223">
    <property type="component" value="Chromosome"/>
</dbReference>
<dbReference type="GO" id="GO:0030269">
    <property type="term" value="F:tetrahydromethanopterin S-methyltransferase activity"/>
    <property type="evidence" value="ECO:0007669"/>
    <property type="project" value="UniProtKB-UniRule"/>
</dbReference>
<dbReference type="GO" id="GO:0019386">
    <property type="term" value="P:methanogenesis, from carbon dioxide"/>
    <property type="evidence" value="ECO:0007669"/>
    <property type="project" value="UniProtKB-UniRule"/>
</dbReference>
<dbReference type="GO" id="GO:0032259">
    <property type="term" value="P:methylation"/>
    <property type="evidence" value="ECO:0007669"/>
    <property type="project" value="UniProtKB-KW"/>
</dbReference>
<dbReference type="GO" id="GO:0006730">
    <property type="term" value="P:one-carbon metabolic process"/>
    <property type="evidence" value="ECO:0007669"/>
    <property type="project" value="UniProtKB-UniRule"/>
</dbReference>
<dbReference type="FunFam" id="3.20.20.20:FF:000024">
    <property type="entry name" value="Tetrahydromethanopterin S-methyltransferase subunit H"/>
    <property type="match status" value="1"/>
</dbReference>
<dbReference type="Gene3D" id="3.20.20.20">
    <property type="entry name" value="Dihydropteroate synthase-like"/>
    <property type="match status" value="1"/>
</dbReference>
<dbReference type="HAMAP" id="MF_01501">
    <property type="entry name" value="MtrH"/>
    <property type="match status" value="1"/>
</dbReference>
<dbReference type="InterPro" id="IPR011005">
    <property type="entry name" value="Dihydropteroate_synth-like_sf"/>
</dbReference>
<dbReference type="InterPro" id="IPR023467">
    <property type="entry name" value="MeTrfase_MtrH/MtxH"/>
</dbReference>
<dbReference type="InterPro" id="IPR028342">
    <property type="entry name" value="MtrH"/>
</dbReference>
<dbReference type="NCBIfam" id="TIGR01114">
    <property type="entry name" value="mtrH"/>
    <property type="match status" value="1"/>
</dbReference>
<dbReference type="NCBIfam" id="NF002142">
    <property type="entry name" value="PRK00979.1-1"/>
    <property type="match status" value="1"/>
</dbReference>
<dbReference type="Pfam" id="PF02007">
    <property type="entry name" value="MtrH"/>
    <property type="match status" value="1"/>
</dbReference>
<dbReference type="PIRSF" id="PIRSF500206">
    <property type="entry name" value="MtrH"/>
    <property type="match status" value="1"/>
</dbReference>
<dbReference type="PIRSF" id="PIRSF004960">
    <property type="entry name" value="MtrH_MtxH"/>
    <property type="match status" value="1"/>
</dbReference>
<dbReference type="SUPFAM" id="SSF51717">
    <property type="entry name" value="Dihydropteroate synthetase-like"/>
    <property type="match status" value="1"/>
</dbReference>
<reference key="1">
    <citation type="journal article" date="1997" name="J. Bacteriol.">
        <title>Complete genome sequence of Methanobacterium thermoautotrophicum deltaH: functional analysis and comparative genomics.</title>
        <authorList>
            <person name="Smith D.R."/>
            <person name="Doucette-Stamm L.A."/>
            <person name="Deloughery C."/>
            <person name="Lee H.-M."/>
            <person name="Dubois J."/>
            <person name="Aldredge T."/>
            <person name="Bashirzadeh R."/>
            <person name="Blakely D."/>
            <person name="Cook R."/>
            <person name="Gilbert K."/>
            <person name="Harrison D."/>
            <person name="Hoang L."/>
            <person name="Keagle P."/>
            <person name="Lumm W."/>
            <person name="Pothier B."/>
            <person name="Qiu D."/>
            <person name="Spadafora R."/>
            <person name="Vicare R."/>
            <person name="Wang Y."/>
            <person name="Wierzbowski J."/>
            <person name="Gibson R."/>
            <person name="Jiwani N."/>
            <person name="Caruso A."/>
            <person name="Bush D."/>
            <person name="Safer H."/>
            <person name="Patwell D."/>
            <person name="Prabhakar S."/>
            <person name="McDougall S."/>
            <person name="Shimer G."/>
            <person name="Goyal A."/>
            <person name="Pietrovski S."/>
            <person name="Church G.M."/>
            <person name="Daniels C.J."/>
            <person name="Mao J.-I."/>
            <person name="Rice P."/>
            <person name="Noelling J."/>
            <person name="Reeve J.N."/>
        </authorList>
    </citation>
    <scope>NUCLEOTIDE SEQUENCE [LARGE SCALE GENOMIC DNA]</scope>
    <source>
        <strain>ATCC 29096 / DSM 1053 / JCM 10044 / NBRC 100330 / Delta H</strain>
    </source>
</reference>
<proteinExistence type="inferred from homology"/>
<gene>
    <name evidence="1" type="primary">mtrH</name>
    <name type="ordered locus">MTH_1156</name>
</gene>